<protein>
    <recommendedName>
        <fullName evidence="1">Proline--tRNA ligase</fullName>
        <ecNumber evidence="1">6.1.1.15</ecNumber>
    </recommendedName>
    <alternativeName>
        <fullName evidence="1">Prolyl-tRNA synthetase</fullName>
        <shortName evidence="1">ProRS</shortName>
    </alternativeName>
</protein>
<gene>
    <name evidence="1" type="primary">proS</name>
    <name type="ordered locus">NT01CX_0337</name>
</gene>
<sequence>MSKKKKFVEAITPMDEDFAKWYTDIVKKAELVDYASVKGCMIIRPYGYAIWENIQKYLDTKFKETGHENVYMPMFIPESLLQKEKDHVEGFAPEVAWVTQGGNDTLAERLCVRPTSETLFCDHYAKIIQSHNDLPKKYNQWCSVVRWEKTTRPFLRTTEFLWQEGHTAHATAEESAKETIDMLNVYANFCENVLAIPVIKGQKTEKEKFAGAKATYTIESLMHDGKALQSGTSHNFGDNFSKAFNIQYNDKNSQLQYVHQTSWGVTTRLIGAIIMVHGDDSGLKLPPRIAPLQVVIVPIAQHKEGVLDKAEELRQRIAKVARVKVDSSDKMPGWKFNEYEMKGVPVRLEVGPKDIENNQVVLVRRDTREKIFVSMDELETKIPELLDEIHNSMLEHARTHRDEHTYTAKTLDEFKEIADTKPGFIKAMWCGDTACEEKLKEVAGVSSRCMPFEQEEITDKCICCGKEAKHMVYWGKAY</sequence>
<accession>A0Q2I3</accession>
<reference key="1">
    <citation type="journal article" date="2006" name="Nat. Biotechnol.">
        <title>The genome and transcriptomes of the anti-tumor agent Clostridium novyi-NT.</title>
        <authorList>
            <person name="Bettegowda C."/>
            <person name="Huang X."/>
            <person name="Lin J."/>
            <person name="Cheong I."/>
            <person name="Kohli M."/>
            <person name="Szabo S.A."/>
            <person name="Zhang X."/>
            <person name="Diaz L.A. Jr."/>
            <person name="Velculescu V.E."/>
            <person name="Parmigiani G."/>
            <person name="Kinzler K.W."/>
            <person name="Vogelstein B."/>
            <person name="Zhou S."/>
        </authorList>
    </citation>
    <scope>NUCLEOTIDE SEQUENCE [LARGE SCALE GENOMIC DNA]</scope>
    <source>
        <strain>NT</strain>
    </source>
</reference>
<keyword id="KW-0030">Aminoacyl-tRNA synthetase</keyword>
<keyword id="KW-0067">ATP-binding</keyword>
<keyword id="KW-0963">Cytoplasm</keyword>
<keyword id="KW-0436">Ligase</keyword>
<keyword id="KW-0547">Nucleotide-binding</keyword>
<keyword id="KW-0648">Protein biosynthesis</keyword>
<keyword id="KW-1185">Reference proteome</keyword>
<name>SYP_CLONN</name>
<proteinExistence type="inferred from homology"/>
<evidence type="ECO:0000255" key="1">
    <source>
        <dbReference type="HAMAP-Rule" id="MF_01571"/>
    </source>
</evidence>
<comment type="function">
    <text evidence="1">Catalyzes the attachment of proline to tRNA(Pro) in a two-step reaction: proline is first activated by ATP to form Pro-AMP and then transferred to the acceptor end of tRNA(Pro).</text>
</comment>
<comment type="catalytic activity">
    <reaction evidence="1">
        <text>tRNA(Pro) + L-proline + ATP = L-prolyl-tRNA(Pro) + AMP + diphosphate</text>
        <dbReference type="Rhea" id="RHEA:14305"/>
        <dbReference type="Rhea" id="RHEA-COMP:9700"/>
        <dbReference type="Rhea" id="RHEA-COMP:9702"/>
        <dbReference type="ChEBI" id="CHEBI:30616"/>
        <dbReference type="ChEBI" id="CHEBI:33019"/>
        <dbReference type="ChEBI" id="CHEBI:60039"/>
        <dbReference type="ChEBI" id="CHEBI:78442"/>
        <dbReference type="ChEBI" id="CHEBI:78532"/>
        <dbReference type="ChEBI" id="CHEBI:456215"/>
        <dbReference type="EC" id="6.1.1.15"/>
    </reaction>
</comment>
<comment type="subunit">
    <text evidence="1">Homodimer.</text>
</comment>
<comment type="subcellular location">
    <subcellularLocation>
        <location evidence="1">Cytoplasm</location>
    </subcellularLocation>
</comment>
<comment type="domain">
    <text evidence="1">Consists of three domains: the N-terminal catalytic domain, the anticodon-binding domain and the C-terminal extension.</text>
</comment>
<comment type="similarity">
    <text evidence="1">Belongs to the class-II aminoacyl-tRNA synthetase family. ProS type 3 subfamily.</text>
</comment>
<organism>
    <name type="scientific">Clostridium novyi (strain NT)</name>
    <dbReference type="NCBI Taxonomy" id="386415"/>
    <lineage>
        <taxon>Bacteria</taxon>
        <taxon>Bacillati</taxon>
        <taxon>Bacillota</taxon>
        <taxon>Clostridia</taxon>
        <taxon>Eubacteriales</taxon>
        <taxon>Clostridiaceae</taxon>
        <taxon>Clostridium</taxon>
    </lineage>
</organism>
<dbReference type="EC" id="6.1.1.15" evidence="1"/>
<dbReference type="EMBL" id="CP000382">
    <property type="protein sequence ID" value="ABK61661.1"/>
    <property type="molecule type" value="Genomic_DNA"/>
</dbReference>
<dbReference type="RefSeq" id="WP_011722820.1">
    <property type="nucleotide sequence ID" value="NC_008593.1"/>
</dbReference>
<dbReference type="SMR" id="A0Q2I3"/>
<dbReference type="STRING" id="386415.NT01CX_0337"/>
<dbReference type="KEGG" id="cno:NT01CX_0337"/>
<dbReference type="eggNOG" id="COG0441">
    <property type="taxonomic scope" value="Bacteria"/>
</dbReference>
<dbReference type="HOGENOM" id="CLU_001882_4_2_9"/>
<dbReference type="Proteomes" id="UP000008220">
    <property type="component" value="Chromosome"/>
</dbReference>
<dbReference type="GO" id="GO:0017101">
    <property type="term" value="C:aminoacyl-tRNA synthetase multienzyme complex"/>
    <property type="evidence" value="ECO:0007669"/>
    <property type="project" value="TreeGrafter"/>
</dbReference>
<dbReference type="GO" id="GO:0005737">
    <property type="term" value="C:cytoplasm"/>
    <property type="evidence" value="ECO:0007669"/>
    <property type="project" value="UniProtKB-SubCell"/>
</dbReference>
<dbReference type="GO" id="GO:0005524">
    <property type="term" value="F:ATP binding"/>
    <property type="evidence" value="ECO:0007669"/>
    <property type="project" value="UniProtKB-UniRule"/>
</dbReference>
<dbReference type="GO" id="GO:0140096">
    <property type="term" value="F:catalytic activity, acting on a protein"/>
    <property type="evidence" value="ECO:0007669"/>
    <property type="project" value="UniProtKB-ARBA"/>
</dbReference>
<dbReference type="GO" id="GO:0004827">
    <property type="term" value="F:proline-tRNA ligase activity"/>
    <property type="evidence" value="ECO:0007669"/>
    <property type="project" value="UniProtKB-UniRule"/>
</dbReference>
<dbReference type="GO" id="GO:0016740">
    <property type="term" value="F:transferase activity"/>
    <property type="evidence" value="ECO:0007669"/>
    <property type="project" value="UniProtKB-ARBA"/>
</dbReference>
<dbReference type="GO" id="GO:0006433">
    <property type="term" value="P:prolyl-tRNA aminoacylation"/>
    <property type="evidence" value="ECO:0007669"/>
    <property type="project" value="UniProtKB-UniRule"/>
</dbReference>
<dbReference type="CDD" id="cd00862">
    <property type="entry name" value="ProRS_anticodon_zinc"/>
    <property type="match status" value="1"/>
</dbReference>
<dbReference type="CDD" id="cd00778">
    <property type="entry name" value="ProRS_core_arch_euk"/>
    <property type="match status" value="1"/>
</dbReference>
<dbReference type="FunFam" id="3.40.50.800:FF:000005">
    <property type="entry name" value="bifunctional glutamate/proline--tRNA ligase"/>
    <property type="match status" value="1"/>
</dbReference>
<dbReference type="FunFam" id="3.30.110.30:FF:000005">
    <property type="entry name" value="Proline--tRNA ligase"/>
    <property type="match status" value="1"/>
</dbReference>
<dbReference type="FunFam" id="3.30.930.10:FF:000023">
    <property type="entry name" value="Proline--tRNA ligase"/>
    <property type="match status" value="1"/>
</dbReference>
<dbReference type="Gene3D" id="3.40.50.800">
    <property type="entry name" value="Anticodon-binding domain"/>
    <property type="match status" value="1"/>
</dbReference>
<dbReference type="Gene3D" id="3.30.930.10">
    <property type="entry name" value="Bira Bifunctional Protein, Domain 2"/>
    <property type="match status" value="1"/>
</dbReference>
<dbReference type="Gene3D" id="3.30.110.30">
    <property type="entry name" value="C-terminal domain of ProRS"/>
    <property type="match status" value="1"/>
</dbReference>
<dbReference type="HAMAP" id="MF_01571">
    <property type="entry name" value="Pro_tRNA_synth_type3"/>
    <property type="match status" value="1"/>
</dbReference>
<dbReference type="InterPro" id="IPR002314">
    <property type="entry name" value="aa-tRNA-synt_IIb"/>
</dbReference>
<dbReference type="InterPro" id="IPR006195">
    <property type="entry name" value="aa-tRNA-synth_II"/>
</dbReference>
<dbReference type="InterPro" id="IPR045864">
    <property type="entry name" value="aa-tRNA-synth_II/BPL/LPL"/>
</dbReference>
<dbReference type="InterPro" id="IPR004154">
    <property type="entry name" value="Anticodon-bd"/>
</dbReference>
<dbReference type="InterPro" id="IPR036621">
    <property type="entry name" value="Anticodon-bd_dom_sf"/>
</dbReference>
<dbReference type="InterPro" id="IPR002316">
    <property type="entry name" value="Pro-tRNA-ligase_IIa"/>
</dbReference>
<dbReference type="InterPro" id="IPR004499">
    <property type="entry name" value="Pro-tRNA-ligase_IIa_arc-type"/>
</dbReference>
<dbReference type="InterPro" id="IPR016061">
    <property type="entry name" value="Pro-tRNA_ligase_II_C"/>
</dbReference>
<dbReference type="InterPro" id="IPR017449">
    <property type="entry name" value="Pro-tRNA_synth_II"/>
</dbReference>
<dbReference type="InterPro" id="IPR033721">
    <property type="entry name" value="ProRS_core_arch_euk"/>
</dbReference>
<dbReference type="NCBIfam" id="TIGR00408">
    <property type="entry name" value="proS_fam_I"/>
    <property type="match status" value="1"/>
</dbReference>
<dbReference type="PANTHER" id="PTHR43382:SF2">
    <property type="entry name" value="BIFUNCTIONAL GLUTAMATE_PROLINE--TRNA LIGASE"/>
    <property type="match status" value="1"/>
</dbReference>
<dbReference type="PANTHER" id="PTHR43382">
    <property type="entry name" value="PROLYL-TRNA SYNTHETASE"/>
    <property type="match status" value="1"/>
</dbReference>
<dbReference type="Pfam" id="PF03129">
    <property type="entry name" value="HGTP_anticodon"/>
    <property type="match status" value="1"/>
</dbReference>
<dbReference type="Pfam" id="PF09180">
    <property type="entry name" value="ProRS-C_1"/>
    <property type="match status" value="1"/>
</dbReference>
<dbReference type="Pfam" id="PF00587">
    <property type="entry name" value="tRNA-synt_2b"/>
    <property type="match status" value="1"/>
</dbReference>
<dbReference type="PRINTS" id="PR01046">
    <property type="entry name" value="TRNASYNTHPRO"/>
</dbReference>
<dbReference type="SMART" id="SM00946">
    <property type="entry name" value="ProRS-C_1"/>
    <property type="match status" value="1"/>
</dbReference>
<dbReference type="SUPFAM" id="SSF64586">
    <property type="entry name" value="C-terminal domain of ProRS"/>
    <property type="match status" value="1"/>
</dbReference>
<dbReference type="SUPFAM" id="SSF52954">
    <property type="entry name" value="Class II aaRS ABD-related"/>
    <property type="match status" value="1"/>
</dbReference>
<dbReference type="SUPFAM" id="SSF55681">
    <property type="entry name" value="Class II aaRS and biotin synthetases"/>
    <property type="match status" value="1"/>
</dbReference>
<dbReference type="PROSITE" id="PS50862">
    <property type="entry name" value="AA_TRNA_LIGASE_II"/>
    <property type="match status" value="1"/>
</dbReference>
<feature type="chain" id="PRO_0000288407" description="Proline--tRNA ligase">
    <location>
        <begin position="1"/>
        <end position="478"/>
    </location>
</feature>